<keyword id="KW-0007">Acetylation</keyword>
<keyword id="KW-1003">Cell membrane</keyword>
<keyword id="KW-0963">Cytoplasm</keyword>
<keyword id="KW-0472">Membrane</keyword>
<keyword id="KW-0479">Metal-binding</keyword>
<keyword id="KW-1185">Reference proteome</keyword>
<keyword id="KW-0808">Transferase</keyword>
<keyword id="KW-0862">Zinc</keyword>
<proteinExistence type="evidence at protein level"/>
<evidence type="ECO:0000250" key="1">
    <source>
        <dbReference type="UniProtKB" id="O43813"/>
    </source>
</evidence>
<evidence type="ECO:0000250" key="2">
    <source>
        <dbReference type="UniProtKB" id="O89112"/>
    </source>
</evidence>
<evidence type="ECO:0000250" key="3">
    <source>
        <dbReference type="UniProtKB" id="Q9QX69"/>
    </source>
</evidence>
<evidence type="ECO:0000269" key="4">
    <source>
    </source>
</evidence>
<evidence type="ECO:0000305" key="5"/>
<evidence type="ECO:0000312" key="6">
    <source>
        <dbReference type="EMBL" id="AAI15992.1"/>
    </source>
</evidence>
<evidence type="ECO:0000312" key="7">
    <source>
        <dbReference type="Proteomes" id="UP000009136"/>
    </source>
</evidence>
<sequence length="399" mass="45309">MAQRAFPNPYADYNKSLAEGYFDSAGRLTPEFSQRLNNKIRELLQQMERGLKSADPRDSTVYTGWAGIAVLYLHLYDVFGDPNYLQMAHGYVKQSLNSLSKHSITFLCGDGGPLAVAAVVHHKMNNEKQAEECITRLIHLNKIDPHAPSEMLYGRMGYISALLFVNKNFGEEKIPQSHIQQICETVLTSGEDLARKRRFTGKTPLMYEWYQEYYVGAAHGLAGIYYYLMQPSLQVSHAKLHNLVKPSVDYVCQLKFPSGNYPPCVDDSRDLLIHWCHGAPGVIYMLTQAYKVFKEERYLNDAYQCADVIWQYGLLKKGYGLCHGTAGNAYAFLSLYSLTQDAKYLYRACKFAEWCLDYGEHGCRTPDTPFSLFEGMAGTIYFLADLLVPTKARFPAFEL</sequence>
<reference evidence="7" key="1">
    <citation type="journal article" date="2009" name="Genome Biol.">
        <title>A whole-genome assembly of the domestic cow, Bos taurus.</title>
        <authorList>
            <person name="Zimin A.V."/>
            <person name="Delcher A.L."/>
            <person name="Florea L."/>
            <person name="Kelley D.R."/>
            <person name="Schatz M.C."/>
            <person name="Puiu D."/>
            <person name="Hanrahan F."/>
            <person name="Pertea G."/>
            <person name="Van Tassell C.P."/>
            <person name="Sonstegard T.S."/>
            <person name="Marcais G."/>
            <person name="Roberts M."/>
            <person name="Subramanian P."/>
            <person name="Yorke J.A."/>
            <person name="Salzberg S.L."/>
        </authorList>
    </citation>
    <scope>NUCLEOTIDE SEQUENCE [LARGE SCALE GENOMIC DNA]</scope>
    <source>
        <strain evidence="7">Hereford</strain>
    </source>
</reference>
<reference evidence="6" key="2">
    <citation type="submission" date="2005-08" db="EMBL/GenBank/DDBJ databases">
        <authorList>
            <consortium name="NIH - Mammalian Gene Collection (MGC) project"/>
        </authorList>
    </citation>
    <scope>NUCLEOTIDE SEQUENCE [MRNA]</scope>
    <source>
        <strain evidence="6">Hereford</strain>
        <tissue evidence="6">Hypothalamus</tissue>
    </source>
</reference>
<reference evidence="5" key="3">
    <citation type="journal article" date="2007" name="Biochemistry">
        <title>Identification of lanthionine synthase C-like protein-1 as a prominent glutathione binding protein expressed in the mammalian central nervous system.</title>
        <authorList>
            <person name="Chung C.H.Y."/>
            <person name="Kurien B.T."/>
            <person name="Mehta P."/>
            <person name="Mhatre M."/>
            <person name="Mou S."/>
            <person name="Pye Q.N."/>
            <person name="Stewart C."/>
            <person name="West M."/>
            <person name="Williamson K.S."/>
            <person name="Post J."/>
            <person name="Liu L."/>
            <person name="Wang R."/>
            <person name="Hensley K."/>
        </authorList>
    </citation>
    <scope>FUNCTION</scope>
    <scope>TISSUE SPECIFICITY</scope>
    <scope>IDENTIFICATION BY MASS SPECTROMETRY</scope>
</reference>
<organism evidence="7">
    <name type="scientific">Bos taurus</name>
    <name type="common">Bovine</name>
    <dbReference type="NCBI Taxonomy" id="9913"/>
    <lineage>
        <taxon>Eukaryota</taxon>
        <taxon>Metazoa</taxon>
        <taxon>Chordata</taxon>
        <taxon>Craniata</taxon>
        <taxon>Vertebrata</taxon>
        <taxon>Euteleostomi</taxon>
        <taxon>Mammalia</taxon>
        <taxon>Eutheria</taxon>
        <taxon>Laurasiatheria</taxon>
        <taxon>Artiodactyla</taxon>
        <taxon>Ruminantia</taxon>
        <taxon>Pecora</taxon>
        <taxon>Bovidae</taxon>
        <taxon>Bovinae</taxon>
        <taxon>Bos</taxon>
    </lineage>
</organism>
<comment type="function">
    <text evidence="1 2 4">Functions as a glutathione transferase. Catalyzes conjugation of the glutathione (GSH) to artificial substrates 1-chloro-2,4-dinitrobenzene (CDNB) and p-nitrophenyl acetate. Mitigates neuronal oxidative stress during normal postnatal development and in response to oxidative stresses probably through GSH antioxidant defense mechanism (By similarity). May play a role in EPS8 signaling (By similarity). Binds glutathione (PubMed:17305318).</text>
</comment>
<comment type="catalytic activity">
    <reaction evidence="2">
        <text>RX + glutathione = an S-substituted glutathione + a halide anion + H(+)</text>
        <dbReference type="Rhea" id="RHEA:16437"/>
        <dbReference type="ChEBI" id="CHEBI:15378"/>
        <dbReference type="ChEBI" id="CHEBI:16042"/>
        <dbReference type="ChEBI" id="CHEBI:17792"/>
        <dbReference type="ChEBI" id="CHEBI:57925"/>
        <dbReference type="ChEBI" id="CHEBI:90779"/>
        <dbReference type="EC" id="2.5.1.18"/>
    </reaction>
</comment>
<comment type="catalytic activity">
    <reaction evidence="2">
        <text>1-chloro-2,4-dinitrobenzene + glutathione = 2,4-dinitrophenyl-S-glutathione + chloride + H(+)</text>
        <dbReference type="Rhea" id="RHEA:51220"/>
        <dbReference type="ChEBI" id="CHEBI:15378"/>
        <dbReference type="ChEBI" id="CHEBI:17996"/>
        <dbReference type="ChEBI" id="CHEBI:34718"/>
        <dbReference type="ChEBI" id="CHEBI:57925"/>
        <dbReference type="ChEBI" id="CHEBI:133977"/>
        <dbReference type="EC" id="2.5.1.18"/>
    </reaction>
</comment>
<comment type="subunit">
    <text evidence="1">Interacts with the C-terminal of STOM (By similarity). Interacts with the EPS8 SH3 domain (By similarity). Interaction with EPS8 is inhibited by glutathione binding (By similarity).</text>
</comment>
<comment type="subcellular location">
    <subcellularLocation>
        <location evidence="1">Cytoplasm</location>
    </subcellularLocation>
    <subcellularLocation>
        <location evidence="1">Cell membrane</location>
        <topology evidence="1">Peripheral membrane protein</topology>
    </subcellularLocation>
</comment>
<comment type="tissue specificity">
    <text evidence="4">Expressed in brain.</text>
</comment>
<comment type="similarity">
    <text evidence="5">Belongs to the LanC-like protein family.</text>
</comment>
<protein>
    <recommendedName>
        <fullName evidence="2">Glutathione S-transferase LANCL1</fullName>
        <ecNumber evidence="2">2.5.1.18</ecNumber>
    </recommendedName>
    <alternativeName>
        <fullName evidence="3">40 kDa erythrocyte membrane protein</fullName>
        <shortName evidence="3">p40</shortName>
    </alternativeName>
    <alternativeName>
        <fullName evidence="1">LanC-like protein 1</fullName>
    </alternativeName>
</protein>
<accession>F1MVX2</accession>
<accession>Q1LZH8</accession>
<dbReference type="EC" id="2.5.1.18" evidence="2"/>
<dbReference type="EMBL" id="BC115991">
    <property type="protein sequence ID" value="AAI15992.1"/>
    <property type="molecule type" value="mRNA"/>
</dbReference>
<dbReference type="RefSeq" id="NP_001069695.1">
    <property type="nucleotide sequence ID" value="NM_001076227.1"/>
</dbReference>
<dbReference type="RefSeq" id="XP_010800568.1">
    <property type="nucleotide sequence ID" value="XM_010802266.4"/>
</dbReference>
<dbReference type="RefSeq" id="XP_010800569.1">
    <property type="nucleotide sequence ID" value="XM_010802267.4"/>
</dbReference>
<dbReference type="SMR" id="F1MVX2"/>
<dbReference type="FunCoup" id="F1MVX2">
    <property type="interactions" value="2005"/>
</dbReference>
<dbReference type="STRING" id="9913.ENSBTAP00000020055"/>
<dbReference type="PaxDb" id="9913-ENSBTAP00000020055"/>
<dbReference type="GeneID" id="540559"/>
<dbReference type="KEGG" id="bta:540559"/>
<dbReference type="CTD" id="10314"/>
<dbReference type="VEuPathDB" id="HostDB:ENSBTAG00000015066"/>
<dbReference type="eggNOG" id="KOG2787">
    <property type="taxonomic scope" value="Eukaryota"/>
</dbReference>
<dbReference type="HOGENOM" id="CLU_036244_0_0_1"/>
<dbReference type="InParanoid" id="F1MVX2"/>
<dbReference type="OMA" id="PCVDDNR"/>
<dbReference type="OrthoDB" id="10257263at2759"/>
<dbReference type="TreeFam" id="TF300068"/>
<dbReference type="Proteomes" id="UP000009136">
    <property type="component" value="Chromosome 2"/>
</dbReference>
<dbReference type="Bgee" id="ENSBTAG00000015066">
    <property type="expression patterns" value="Expressed in occipital lobe and 104 other cell types or tissues"/>
</dbReference>
<dbReference type="GO" id="GO:0005737">
    <property type="term" value="C:cytoplasm"/>
    <property type="evidence" value="ECO:0007669"/>
    <property type="project" value="UniProtKB-SubCell"/>
</dbReference>
<dbReference type="GO" id="GO:0005886">
    <property type="term" value="C:plasma membrane"/>
    <property type="evidence" value="ECO:0000318"/>
    <property type="project" value="GO_Central"/>
</dbReference>
<dbReference type="GO" id="GO:0004364">
    <property type="term" value="F:glutathione transferase activity"/>
    <property type="evidence" value="ECO:0007669"/>
    <property type="project" value="UniProtKB-EC"/>
</dbReference>
<dbReference type="GO" id="GO:0046872">
    <property type="term" value="F:metal ion binding"/>
    <property type="evidence" value="ECO:0007669"/>
    <property type="project" value="UniProtKB-KW"/>
</dbReference>
<dbReference type="GO" id="GO:0005975">
    <property type="term" value="P:carbohydrate metabolic process"/>
    <property type="evidence" value="ECO:0007669"/>
    <property type="project" value="InterPro"/>
</dbReference>
<dbReference type="GO" id="GO:0031179">
    <property type="term" value="P:peptide modification"/>
    <property type="evidence" value="ECO:0007669"/>
    <property type="project" value="InterPro"/>
</dbReference>
<dbReference type="CDD" id="cd04794">
    <property type="entry name" value="euk_LANCL"/>
    <property type="match status" value="1"/>
</dbReference>
<dbReference type="FunFam" id="1.50.10.10:FF:000019">
    <property type="entry name" value="LanC-like protein 1"/>
    <property type="match status" value="1"/>
</dbReference>
<dbReference type="Gene3D" id="1.50.10.10">
    <property type="match status" value="1"/>
</dbReference>
<dbReference type="InterPro" id="IPR012341">
    <property type="entry name" value="6hp_glycosidase-like_sf"/>
</dbReference>
<dbReference type="InterPro" id="IPR007822">
    <property type="entry name" value="LANC-like"/>
</dbReference>
<dbReference type="InterPro" id="IPR020464">
    <property type="entry name" value="LanC-like_prot_euk"/>
</dbReference>
<dbReference type="PANTHER" id="PTHR12736:SF5">
    <property type="entry name" value="GLUTATHIONE S-TRANSFERASE LANCL1"/>
    <property type="match status" value="1"/>
</dbReference>
<dbReference type="PANTHER" id="PTHR12736">
    <property type="entry name" value="LANC-LIKE PROTEIN"/>
    <property type="match status" value="1"/>
</dbReference>
<dbReference type="Pfam" id="PF05147">
    <property type="entry name" value="LANC_like"/>
    <property type="match status" value="1"/>
</dbReference>
<dbReference type="PRINTS" id="PR01951">
    <property type="entry name" value="LANCEUKARYTE"/>
</dbReference>
<dbReference type="PRINTS" id="PR01950">
    <property type="entry name" value="LANCSUPER"/>
</dbReference>
<dbReference type="SMART" id="SM01260">
    <property type="entry name" value="LANC_like"/>
    <property type="match status" value="1"/>
</dbReference>
<dbReference type="SUPFAM" id="SSF158745">
    <property type="entry name" value="LanC-like"/>
    <property type="match status" value="1"/>
</dbReference>
<feature type="initiator methionine" description="Removed" evidence="1">
    <location>
        <position position="1"/>
    </location>
</feature>
<feature type="chain" id="PRO_0000447675" description="Glutathione S-transferase LANCL1">
    <location>
        <begin position="2"/>
        <end position="399"/>
    </location>
</feature>
<feature type="binding site" evidence="1">
    <location>
        <position position="276"/>
    </location>
    <ligand>
        <name>Zn(2+)</name>
        <dbReference type="ChEBI" id="CHEBI:29105"/>
    </ligand>
</feature>
<feature type="binding site" evidence="1">
    <location>
        <position position="317"/>
    </location>
    <ligand>
        <name>glutathione</name>
        <dbReference type="ChEBI" id="CHEBI:57925"/>
    </ligand>
</feature>
<feature type="binding site" evidence="1">
    <location>
        <position position="322"/>
    </location>
    <ligand>
        <name>Zn(2+)</name>
        <dbReference type="ChEBI" id="CHEBI:29105"/>
    </ligand>
</feature>
<feature type="binding site" evidence="1">
    <location>
        <position position="323"/>
    </location>
    <ligand>
        <name>Zn(2+)</name>
        <dbReference type="ChEBI" id="CHEBI:29105"/>
    </ligand>
</feature>
<feature type="binding site" evidence="1">
    <location>
        <begin position="364"/>
        <end position="367"/>
    </location>
    <ligand>
        <name>glutathione</name>
        <dbReference type="ChEBI" id="CHEBI:57925"/>
    </ligand>
</feature>
<feature type="modified residue" description="N-acetylalanine" evidence="1">
    <location>
        <position position="2"/>
    </location>
</feature>
<feature type="modified residue" description="N6-acetyllysine" evidence="1">
    <location>
        <position position="142"/>
    </location>
</feature>
<feature type="sequence conflict" description="In Ref. 2; AAI15992." evidence="5" ref="2">
    <original>P</original>
    <variation>R</variation>
    <location>
        <position position="145"/>
    </location>
</feature>
<feature type="sequence conflict" description="In Ref. 2; AAI15992." evidence="5" ref="2">
    <original>K</original>
    <variation>E</variation>
    <location>
        <position position="202"/>
    </location>
</feature>
<gene>
    <name type="primary">LANCL1</name>
</gene>
<name>LANC1_BOVIN</name>